<sequence>MPRSLKKGPFIDLHLLKKVEKAMEAGDKKPIKTWSRRSMIIPNMIGMTIAVHNGRQHVPVFVTDEMIGHKLGEFSPTRTYRGHAADKKAKKR</sequence>
<feature type="chain" id="PRO_0000354299" description="Small ribosomal subunit protein uS19">
    <location>
        <begin position="1"/>
        <end position="92"/>
    </location>
</feature>
<proteinExistence type="inferred from homology"/>
<keyword id="KW-0687">Ribonucleoprotein</keyword>
<keyword id="KW-0689">Ribosomal protein</keyword>
<keyword id="KW-0694">RNA-binding</keyword>
<keyword id="KW-0699">rRNA-binding</keyword>
<evidence type="ECO:0000255" key="1">
    <source>
        <dbReference type="HAMAP-Rule" id="MF_00531"/>
    </source>
</evidence>
<evidence type="ECO:0000305" key="2"/>
<comment type="function">
    <text evidence="1">Protein S19 forms a complex with S13 that binds strongly to the 16S ribosomal RNA.</text>
</comment>
<comment type="similarity">
    <text evidence="1">Belongs to the universal ribosomal protein uS19 family.</text>
</comment>
<comment type="sequence caution" evidence="2">
    <conflict type="erroneous initiation">
        <sequence resource="EMBL-CDS" id="ABZ78670"/>
    </conflict>
</comment>
<organism>
    <name type="scientific">Shewanella halifaxensis (strain HAW-EB4)</name>
    <dbReference type="NCBI Taxonomy" id="458817"/>
    <lineage>
        <taxon>Bacteria</taxon>
        <taxon>Pseudomonadati</taxon>
        <taxon>Pseudomonadota</taxon>
        <taxon>Gammaproteobacteria</taxon>
        <taxon>Alteromonadales</taxon>
        <taxon>Shewanellaceae</taxon>
        <taxon>Shewanella</taxon>
    </lineage>
</organism>
<protein>
    <recommendedName>
        <fullName evidence="1">Small ribosomal subunit protein uS19</fullName>
    </recommendedName>
    <alternativeName>
        <fullName evidence="2">30S ribosomal protein S19</fullName>
    </alternativeName>
</protein>
<reference key="1">
    <citation type="submission" date="2008-01" db="EMBL/GenBank/DDBJ databases">
        <title>Complete sequence of Shewanella halifaxensis HAW-EB4.</title>
        <authorList>
            <consortium name="US DOE Joint Genome Institute"/>
            <person name="Copeland A."/>
            <person name="Lucas S."/>
            <person name="Lapidus A."/>
            <person name="Glavina del Rio T."/>
            <person name="Dalin E."/>
            <person name="Tice H."/>
            <person name="Bruce D."/>
            <person name="Goodwin L."/>
            <person name="Pitluck S."/>
            <person name="Sims D."/>
            <person name="Brettin T."/>
            <person name="Detter J.C."/>
            <person name="Han C."/>
            <person name="Kuske C.R."/>
            <person name="Schmutz J."/>
            <person name="Larimer F."/>
            <person name="Land M."/>
            <person name="Hauser L."/>
            <person name="Kyrpides N."/>
            <person name="Kim E."/>
            <person name="Zhao J.-S."/>
            <person name="Richardson P."/>
        </authorList>
    </citation>
    <scope>NUCLEOTIDE SEQUENCE [LARGE SCALE GENOMIC DNA]</scope>
    <source>
        <strain>HAW-EB4</strain>
    </source>
</reference>
<dbReference type="EMBL" id="CP000931">
    <property type="protein sequence ID" value="ABZ78670.1"/>
    <property type="status" value="ALT_INIT"/>
    <property type="molecule type" value="Genomic_DNA"/>
</dbReference>
<dbReference type="RefSeq" id="WP_011863970.1">
    <property type="nucleotide sequence ID" value="NC_010334.1"/>
</dbReference>
<dbReference type="SMR" id="B0TM08"/>
<dbReference type="STRING" id="458817.Shal_4130"/>
<dbReference type="KEGG" id="shl:Shal_4130"/>
<dbReference type="eggNOG" id="COG0185">
    <property type="taxonomic scope" value="Bacteria"/>
</dbReference>
<dbReference type="HOGENOM" id="CLU_144911_0_1_6"/>
<dbReference type="OrthoDB" id="9797833at2"/>
<dbReference type="Proteomes" id="UP000001317">
    <property type="component" value="Chromosome"/>
</dbReference>
<dbReference type="GO" id="GO:0005737">
    <property type="term" value="C:cytoplasm"/>
    <property type="evidence" value="ECO:0007669"/>
    <property type="project" value="UniProtKB-ARBA"/>
</dbReference>
<dbReference type="GO" id="GO:0015935">
    <property type="term" value="C:small ribosomal subunit"/>
    <property type="evidence" value="ECO:0007669"/>
    <property type="project" value="InterPro"/>
</dbReference>
<dbReference type="GO" id="GO:0019843">
    <property type="term" value="F:rRNA binding"/>
    <property type="evidence" value="ECO:0007669"/>
    <property type="project" value="UniProtKB-UniRule"/>
</dbReference>
<dbReference type="GO" id="GO:0003735">
    <property type="term" value="F:structural constituent of ribosome"/>
    <property type="evidence" value="ECO:0007669"/>
    <property type="project" value="InterPro"/>
</dbReference>
<dbReference type="GO" id="GO:0000028">
    <property type="term" value="P:ribosomal small subunit assembly"/>
    <property type="evidence" value="ECO:0007669"/>
    <property type="project" value="TreeGrafter"/>
</dbReference>
<dbReference type="GO" id="GO:0006412">
    <property type="term" value="P:translation"/>
    <property type="evidence" value="ECO:0007669"/>
    <property type="project" value="UniProtKB-UniRule"/>
</dbReference>
<dbReference type="FunFam" id="3.30.860.10:FF:000001">
    <property type="entry name" value="30S ribosomal protein S19"/>
    <property type="match status" value="1"/>
</dbReference>
<dbReference type="Gene3D" id="3.30.860.10">
    <property type="entry name" value="30s Ribosomal Protein S19, Chain A"/>
    <property type="match status" value="1"/>
</dbReference>
<dbReference type="HAMAP" id="MF_00531">
    <property type="entry name" value="Ribosomal_uS19"/>
    <property type="match status" value="1"/>
</dbReference>
<dbReference type="InterPro" id="IPR002222">
    <property type="entry name" value="Ribosomal_uS19"/>
</dbReference>
<dbReference type="InterPro" id="IPR005732">
    <property type="entry name" value="Ribosomal_uS19_bac-type"/>
</dbReference>
<dbReference type="InterPro" id="IPR020934">
    <property type="entry name" value="Ribosomal_uS19_CS"/>
</dbReference>
<dbReference type="InterPro" id="IPR023575">
    <property type="entry name" value="Ribosomal_uS19_SF"/>
</dbReference>
<dbReference type="NCBIfam" id="TIGR01050">
    <property type="entry name" value="rpsS_bact"/>
    <property type="match status" value="1"/>
</dbReference>
<dbReference type="PANTHER" id="PTHR11880">
    <property type="entry name" value="RIBOSOMAL PROTEIN S19P FAMILY MEMBER"/>
    <property type="match status" value="1"/>
</dbReference>
<dbReference type="PANTHER" id="PTHR11880:SF8">
    <property type="entry name" value="SMALL RIBOSOMAL SUBUNIT PROTEIN US19M"/>
    <property type="match status" value="1"/>
</dbReference>
<dbReference type="Pfam" id="PF00203">
    <property type="entry name" value="Ribosomal_S19"/>
    <property type="match status" value="1"/>
</dbReference>
<dbReference type="PIRSF" id="PIRSF002144">
    <property type="entry name" value="Ribosomal_S19"/>
    <property type="match status" value="1"/>
</dbReference>
<dbReference type="PRINTS" id="PR00975">
    <property type="entry name" value="RIBOSOMALS19"/>
</dbReference>
<dbReference type="SUPFAM" id="SSF54570">
    <property type="entry name" value="Ribosomal protein S19"/>
    <property type="match status" value="1"/>
</dbReference>
<dbReference type="PROSITE" id="PS00323">
    <property type="entry name" value="RIBOSOMAL_S19"/>
    <property type="match status" value="1"/>
</dbReference>
<accession>B0TM08</accession>
<gene>
    <name evidence="1" type="primary">rpsS</name>
    <name type="ordered locus">Shal_4130</name>
</gene>
<name>RS19_SHEHH</name>